<accession>B7L747</accession>
<proteinExistence type="inferred from homology"/>
<organism>
    <name type="scientific">Escherichia coli (strain 55989 / EAEC)</name>
    <dbReference type="NCBI Taxonomy" id="585055"/>
    <lineage>
        <taxon>Bacteria</taxon>
        <taxon>Pseudomonadati</taxon>
        <taxon>Pseudomonadota</taxon>
        <taxon>Gammaproteobacteria</taxon>
        <taxon>Enterobacterales</taxon>
        <taxon>Enterobacteriaceae</taxon>
        <taxon>Escherichia</taxon>
    </lineage>
</organism>
<keyword id="KW-0067">ATP-binding</keyword>
<keyword id="KW-0173">Coenzyme A biosynthesis</keyword>
<keyword id="KW-0963">Cytoplasm</keyword>
<keyword id="KW-0460">Magnesium</keyword>
<keyword id="KW-0547">Nucleotide-binding</keyword>
<keyword id="KW-0548">Nucleotidyltransferase</keyword>
<keyword id="KW-1185">Reference proteome</keyword>
<keyword id="KW-0808">Transferase</keyword>
<sequence>MQKRAIYPGTFDPITNGHIDIVTRATQMFDHVILAIAASPSKKPMFTLEERVALAQQATAHLGNVEVVGFSDLMANFARNQHATVLIRGLRAVADFEYEMQLAHMNRHLMPELESVFLMPSKEWSFISSSLVKEVARHQGDVTHFLPENVHQALMAKLA</sequence>
<gene>
    <name evidence="1" type="primary">coaD</name>
    <name type="ordered locus">EC55989_4098</name>
</gene>
<comment type="function">
    <text evidence="1">Reversibly transfers an adenylyl group from ATP to 4'-phosphopantetheine, yielding dephospho-CoA (dPCoA) and pyrophosphate.</text>
</comment>
<comment type="catalytic activity">
    <reaction evidence="1">
        <text>(R)-4'-phosphopantetheine + ATP + H(+) = 3'-dephospho-CoA + diphosphate</text>
        <dbReference type="Rhea" id="RHEA:19801"/>
        <dbReference type="ChEBI" id="CHEBI:15378"/>
        <dbReference type="ChEBI" id="CHEBI:30616"/>
        <dbReference type="ChEBI" id="CHEBI:33019"/>
        <dbReference type="ChEBI" id="CHEBI:57328"/>
        <dbReference type="ChEBI" id="CHEBI:61723"/>
        <dbReference type="EC" id="2.7.7.3"/>
    </reaction>
</comment>
<comment type="cofactor">
    <cofactor evidence="1">
        <name>Mg(2+)</name>
        <dbReference type="ChEBI" id="CHEBI:18420"/>
    </cofactor>
</comment>
<comment type="pathway">
    <text evidence="1">Cofactor biosynthesis; coenzyme A biosynthesis; CoA from (R)-pantothenate: step 4/5.</text>
</comment>
<comment type="subunit">
    <text evidence="1">Homohexamer.</text>
</comment>
<comment type="subcellular location">
    <subcellularLocation>
        <location evidence="1">Cytoplasm</location>
    </subcellularLocation>
</comment>
<comment type="similarity">
    <text evidence="1">Belongs to the bacterial CoaD family.</text>
</comment>
<feature type="chain" id="PRO_1000123286" description="Phosphopantetheine adenylyltransferase">
    <location>
        <begin position="1"/>
        <end position="159"/>
    </location>
</feature>
<feature type="binding site" evidence="1">
    <location>
        <begin position="10"/>
        <end position="11"/>
    </location>
    <ligand>
        <name>ATP</name>
        <dbReference type="ChEBI" id="CHEBI:30616"/>
    </ligand>
</feature>
<feature type="binding site" evidence="1">
    <location>
        <position position="10"/>
    </location>
    <ligand>
        <name>substrate</name>
    </ligand>
</feature>
<feature type="binding site" evidence="1">
    <location>
        <position position="18"/>
    </location>
    <ligand>
        <name>ATP</name>
        <dbReference type="ChEBI" id="CHEBI:30616"/>
    </ligand>
</feature>
<feature type="binding site" evidence="1">
    <location>
        <position position="42"/>
    </location>
    <ligand>
        <name>substrate</name>
    </ligand>
</feature>
<feature type="binding site" evidence="1">
    <location>
        <position position="74"/>
    </location>
    <ligand>
        <name>substrate</name>
    </ligand>
</feature>
<feature type="binding site" evidence="1">
    <location>
        <position position="88"/>
    </location>
    <ligand>
        <name>substrate</name>
    </ligand>
</feature>
<feature type="binding site" evidence="1">
    <location>
        <begin position="89"/>
        <end position="91"/>
    </location>
    <ligand>
        <name>ATP</name>
        <dbReference type="ChEBI" id="CHEBI:30616"/>
    </ligand>
</feature>
<feature type="binding site" evidence="1">
    <location>
        <position position="99"/>
    </location>
    <ligand>
        <name>ATP</name>
        <dbReference type="ChEBI" id="CHEBI:30616"/>
    </ligand>
</feature>
<feature type="binding site" evidence="1">
    <location>
        <begin position="124"/>
        <end position="130"/>
    </location>
    <ligand>
        <name>ATP</name>
        <dbReference type="ChEBI" id="CHEBI:30616"/>
    </ligand>
</feature>
<feature type="site" description="Transition state stabilizer" evidence="1">
    <location>
        <position position="18"/>
    </location>
</feature>
<evidence type="ECO:0000255" key="1">
    <source>
        <dbReference type="HAMAP-Rule" id="MF_00151"/>
    </source>
</evidence>
<dbReference type="EC" id="2.7.7.3" evidence="1"/>
<dbReference type="EMBL" id="CU928145">
    <property type="protein sequence ID" value="CAV00636.1"/>
    <property type="molecule type" value="Genomic_DNA"/>
</dbReference>
<dbReference type="RefSeq" id="WP_001171866.1">
    <property type="nucleotide sequence ID" value="NC_011748.1"/>
</dbReference>
<dbReference type="SMR" id="B7L747"/>
<dbReference type="GeneID" id="75202203"/>
<dbReference type="KEGG" id="eck:EC55989_4098"/>
<dbReference type="HOGENOM" id="CLU_100149_0_1_6"/>
<dbReference type="UniPathway" id="UPA00241">
    <property type="reaction ID" value="UER00355"/>
</dbReference>
<dbReference type="Proteomes" id="UP000000746">
    <property type="component" value="Chromosome"/>
</dbReference>
<dbReference type="GO" id="GO:0005737">
    <property type="term" value="C:cytoplasm"/>
    <property type="evidence" value="ECO:0007669"/>
    <property type="project" value="UniProtKB-SubCell"/>
</dbReference>
<dbReference type="GO" id="GO:0005524">
    <property type="term" value="F:ATP binding"/>
    <property type="evidence" value="ECO:0007669"/>
    <property type="project" value="UniProtKB-KW"/>
</dbReference>
<dbReference type="GO" id="GO:0004595">
    <property type="term" value="F:pantetheine-phosphate adenylyltransferase activity"/>
    <property type="evidence" value="ECO:0007669"/>
    <property type="project" value="UniProtKB-UniRule"/>
</dbReference>
<dbReference type="GO" id="GO:0015937">
    <property type="term" value="P:coenzyme A biosynthetic process"/>
    <property type="evidence" value="ECO:0007669"/>
    <property type="project" value="UniProtKB-UniRule"/>
</dbReference>
<dbReference type="CDD" id="cd02163">
    <property type="entry name" value="PPAT"/>
    <property type="match status" value="1"/>
</dbReference>
<dbReference type="FunFam" id="3.40.50.620:FF:000012">
    <property type="entry name" value="Phosphopantetheine adenylyltransferase"/>
    <property type="match status" value="1"/>
</dbReference>
<dbReference type="Gene3D" id="3.40.50.620">
    <property type="entry name" value="HUPs"/>
    <property type="match status" value="1"/>
</dbReference>
<dbReference type="HAMAP" id="MF_00151">
    <property type="entry name" value="PPAT_bact"/>
    <property type="match status" value="1"/>
</dbReference>
<dbReference type="InterPro" id="IPR004821">
    <property type="entry name" value="Cyt_trans-like"/>
</dbReference>
<dbReference type="InterPro" id="IPR001980">
    <property type="entry name" value="PPAT"/>
</dbReference>
<dbReference type="InterPro" id="IPR014729">
    <property type="entry name" value="Rossmann-like_a/b/a_fold"/>
</dbReference>
<dbReference type="NCBIfam" id="TIGR01510">
    <property type="entry name" value="coaD_prev_kdtB"/>
    <property type="match status" value="1"/>
</dbReference>
<dbReference type="NCBIfam" id="TIGR00125">
    <property type="entry name" value="cyt_tran_rel"/>
    <property type="match status" value="1"/>
</dbReference>
<dbReference type="PANTHER" id="PTHR21342">
    <property type="entry name" value="PHOSPHOPANTETHEINE ADENYLYLTRANSFERASE"/>
    <property type="match status" value="1"/>
</dbReference>
<dbReference type="PANTHER" id="PTHR21342:SF1">
    <property type="entry name" value="PHOSPHOPANTETHEINE ADENYLYLTRANSFERASE"/>
    <property type="match status" value="1"/>
</dbReference>
<dbReference type="Pfam" id="PF01467">
    <property type="entry name" value="CTP_transf_like"/>
    <property type="match status" value="1"/>
</dbReference>
<dbReference type="PRINTS" id="PR01020">
    <property type="entry name" value="LPSBIOSNTHSS"/>
</dbReference>
<dbReference type="SUPFAM" id="SSF52374">
    <property type="entry name" value="Nucleotidylyl transferase"/>
    <property type="match status" value="1"/>
</dbReference>
<reference key="1">
    <citation type="journal article" date="2009" name="PLoS Genet.">
        <title>Organised genome dynamics in the Escherichia coli species results in highly diverse adaptive paths.</title>
        <authorList>
            <person name="Touchon M."/>
            <person name="Hoede C."/>
            <person name="Tenaillon O."/>
            <person name="Barbe V."/>
            <person name="Baeriswyl S."/>
            <person name="Bidet P."/>
            <person name="Bingen E."/>
            <person name="Bonacorsi S."/>
            <person name="Bouchier C."/>
            <person name="Bouvet O."/>
            <person name="Calteau A."/>
            <person name="Chiapello H."/>
            <person name="Clermont O."/>
            <person name="Cruveiller S."/>
            <person name="Danchin A."/>
            <person name="Diard M."/>
            <person name="Dossat C."/>
            <person name="Karoui M.E."/>
            <person name="Frapy E."/>
            <person name="Garry L."/>
            <person name="Ghigo J.M."/>
            <person name="Gilles A.M."/>
            <person name="Johnson J."/>
            <person name="Le Bouguenec C."/>
            <person name="Lescat M."/>
            <person name="Mangenot S."/>
            <person name="Martinez-Jehanne V."/>
            <person name="Matic I."/>
            <person name="Nassif X."/>
            <person name="Oztas S."/>
            <person name="Petit M.A."/>
            <person name="Pichon C."/>
            <person name="Rouy Z."/>
            <person name="Ruf C.S."/>
            <person name="Schneider D."/>
            <person name="Tourret J."/>
            <person name="Vacherie B."/>
            <person name="Vallenet D."/>
            <person name="Medigue C."/>
            <person name="Rocha E.P.C."/>
            <person name="Denamur E."/>
        </authorList>
    </citation>
    <scope>NUCLEOTIDE SEQUENCE [LARGE SCALE GENOMIC DNA]</scope>
    <source>
        <strain>55989 / EAEC</strain>
    </source>
</reference>
<name>COAD_ECO55</name>
<protein>
    <recommendedName>
        <fullName evidence="1">Phosphopantetheine adenylyltransferase</fullName>
        <ecNumber evidence="1">2.7.7.3</ecNumber>
    </recommendedName>
    <alternativeName>
        <fullName evidence="1">Dephospho-CoA pyrophosphorylase</fullName>
    </alternativeName>
    <alternativeName>
        <fullName evidence="1">Pantetheine-phosphate adenylyltransferase</fullName>
        <shortName evidence="1">PPAT</shortName>
    </alternativeName>
</protein>